<name>VKGUA_SIMGU</name>
<accession>F5GTK6</accession>
<keyword id="KW-1203">Blood coagulation cascade inhibiting toxin</keyword>
<keyword id="KW-1015">Disulfide bond</keyword>
<keyword id="KW-1199">Hemostasis impairing toxin</keyword>
<keyword id="KW-0646">Protease inhibitor</keyword>
<keyword id="KW-0964">Secreted</keyword>
<keyword id="KW-0722">Serine protease inhibitor</keyword>
<keyword id="KW-0732">Signal</keyword>
<keyword id="KW-0800">Toxin</keyword>
<evidence type="ECO:0000255" key="1"/>
<evidence type="ECO:0000255" key="2">
    <source>
        <dbReference type="PROSITE-ProRule" id="PRU00031"/>
    </source>
</evidence>
<evidence type="ECO:0000256" key="3">
    <source>
        <dbReference type="SAM" id="MobiDB-lite"/>
    </source>
</evidence>
<evidence type="ECO:0000269" key="4">
    <source>
    </source>
</evidence>
<evidence type="ECO:0000269" key="5">
    <source>
    </source>
</evidence>
<evidence type="ECO:0000303" key="6">
    <source>
    </source>
</evidence>
<evidence type="ECO:0000305" key="7"/>
<evidence type="ECO:0000312" key="8">
    <source>
        <dbReference type="EMBL" id="AEB96404.1"/>
    </source>
</evidence>
<protein>
    <recommendedName>
        <fullName evidence="6">Guianensin</fullName>
    </recommendedName>
    <alternativeName>
        <fullName evidence="8">Single Kunitz protease inhibitor</fullName>
    </alternativeName>
</protein>
<dbReference type="EMBL" id="JI626169">
    <property type="protein sequence ID" value="AEB96404.1"/>
    <property type="molecule type" value="mRNA"/>
</dbReference>
<dbReference type="SMR" id="F5GTK6"/>
<dbReference type="GO" id="GO:0005615">
    <property type="term" value="C:extracellular space"/>
    <property type="evidence" value="ECO:0007669"/>
    <property type="project" value="TreeGrafter"/>
</dbReference>
<dbReference type="GO" id="GO:0004867">
    <property type="term" value="F:serine-type endopeptidase inhibitor activity"/>
    <property type="evidence" value="ECO:0007669"/>
    <property type="project" value="UniProtKB-KW"/>
</dbReference>
<dbReference type="GO" id="GO:0090729">
    <property type="term" value="F:toxin activity"/>
    <property type="evidence" value="ECO:0007669"/>
    <property type="project" value="UniProtKB-KW"/>
</dbReference>
<dbReference type="CDD" id="cd00109">
    <property type="entry name" value="Kunitz-type"/>
    <property type="match status" value="1"/>
</dbReference>
<dbReference type="FunFam" id="4.10.410.10:FF:000004">
    <property type="entry name" value="Tissue factor pathway inhibitor"/>
    <property type="match status" value="1"/>
</dbReference>
<dbReference type="Gene3D" id="4.10.410.10">
    <property type="entry name" value="Pancreatic trypsin inhibitor Kunitz domain"/>
    <property type="match status" value="1"/>
</dbReference>
<dbReference type="InterPro" id="IPR002223">
    <property type="entry name" value="Kunitz_BPTI"/>
</dbReference>
<dbReference type="InterPro" id="IPR036880">
    <property type="entry name" value="Kunitz_BPTI_sf"/>
</dbReference>
<dbReference type="InterPro" id="IPR020901">
    <property type="entry name" value="Prtase_inh_Kunz-CS"/>
</dbReference>
<dbReference type="InterPro" id="IPR050098">
    <property type="entry name" value="TFPI/VKTCI-like"/>
</dbReference>
<dbReference type="PANTHER" id="PTHR10083">
    <property type="entry name" value="KUNITZ-TYPE PROTEASE INHIBITOR-RELATED"/>
    <property type="match status" value="1"/>
</dbReference>
<dbReference type="PANTHER" id="PTHR10083:SF376">
    <property type="entry name" value="SERINE PEPTIDASE INHIBITOR, KUNITZ TYPE, 3"/>
    <property type="match status" value="1"/>
</dbReference>
<dbReference type="Pfam" id="PF00014">
    <property type="entry name" value="Kunitz_BPTI"/>
    <property type="match status" value="1"/>
</dbReference>
<dbReference type="PRINTS" id="PR00759">
    <property type="entry name" value="BASICPTASE"/>
</dbReference>
<dbReference type="SMART" id="SM00131">
    <property type="entry name" value="KU"/>
    <property type="match status" value="1"/>
</dbReference>
<dbReference type="SUPFAM" id="SSF57362">
    <property type="entry name" value="BPTI-like"/>
    <property type="match status" value="1"/>
</dbReference>
<dbReference type="PROSITE" id="PS00280">
    <property type="entry name" value="BPTI_KUNITZ_1"/>
    <property type="match status" value="1"/>
</dbReference>
<dbReference type="PROSITE" id="PS50279">
    <property type="entry name" value="BPTI_KUNITZ_2"/>
    <property type="match status" value="1"/>
</dbReference>
<sequence>MKIALICSVFLVCLAYTWADEDVCSLPMNDGLCRALHKRYYYDSATKTCKMFYYGGCAGNANNFETKRACAEKCYKNKALIKTRKRKPKKKKNNKESSEMTIINMD</sequence>
<proteinExistence type="evidence at protein level"/>
<organism>
    <name type="scientific">Simulium guianense</name>
    <name type="common">Black fly</name>
    <dbReference type="NCBI Taxonomy" id="445764"/>
    <lineage>
        <taxon>Eukaryota</taxon>
        <taxon>Metazoa</taxon>
        <taxon>Ecdysozoa</taxon>
        <taxon>Arthropoda</taxon>
        <taxon>Hexapoda</taxon>
        <taxon>Insecta</taxon>
        <taxon>Pterygota</taxon>
        <taxon>Neoptera</taxon>
        <taxon>Endopterygota</taxon>
        <taxon>Diptera</taxon>
        <taxon>Nematocera</taxon>
        <taxon>Chironomoidea</taxon>
        <taxon>Simuliidae</taxon>
        <taxon>Simulium</taxon>
    </lineage>
</organism>
<comment type="function">
    <text evidence="5">Salivary anticoagulant that targets host coagulation factor Xa (F10) (PubMed:37469515). Blocks activity of host prothrombinase (F10-F5) (PubMed:37469515). Inhibits factor Xa-mediated acute inflammation in the host (PubMed:37469515). Inhibits other host proteases involved in blood coagulation and inflammation: cathepsin G (CTSG), kallikrein, trypsin, alpha-chymotrypsin, beta-tryptase, plasmin (PLG), elastase, proteinase 3 (PRTN3) and coagulation factor XIa (F11) (PubMed:37469515). Inhibits lipopolysaccharide-induced procoagulant effect in human endothelial cells (PubMed:37469515). Inhibits Xa-mediated cleavage of protease-activated receptor 2 (PAR-2/F2RL1) in the host (PubMed:37469515).</text>
</comment>
<comment type="subunit">
    <text evidence="5">Monomer (PubMed:37469515). Interacts with mouse, bovine and human coagulation factor X (F10) (activated) (PubMed:37469515). Interacts with human coagulation factor XI (F11) (activated) (PubMed:37469515). Interacts with human coagulation factor IX (F9) (activated) (PubMed:37469515). Interacts with host plasmin (PLG) (PubMed:37469515). Interacts with host kallikrein (PubMed:37469515).</text>
</comment>
<comment type="subcellular location">
    <subcellularLocation>
        <location evidence="7">Secreted</location>
    </subcellularLocation>
</comment>
<comment type="tissue specificity">
    <text evidence="4">Female salivary gland (at protein level).</text>
</comment>
<comment type="similarity">
    <text evidence="7">Belongs to the venom Kunitz-type family.</text>
</comment>
<reference evidence="8" key="1">
    <citation type="journal article" date="2011" name="BMC Genomics">
        <title>An insight into the sialome of Simulium guianense (DIPTERA:SIMulIIDAE), the main vector of River Blindness Disease in Brazil.</title>
        <authorList>
            <person name="Chagas A.C."/>
            <person name="Calvo E."/>
            <person name="Pimenta P.F."/>
            <person name="Ribeiro J.M."/>
        </authorList>
    </citation>
    <scope>NUCLEOTIDE SEQUENCE [LARGE SCALE MRNA]</scope>
    <scope>IDENTIFICATION BY MASS SPECTROMETRY</scope>
    <scope>TISSUE SPECIFICITY</scope>
    <source>
        <tissue evidence="8">Salivary gland</tissue>
    </source>
</reference>
<reference evidence="7" key="2">
    <citation type="journal article" date="2023" name="Front. Immunol.">
        <title>Guianensin, a Simulium guianense salivary protein, has broad anti-hemostatic and anti-inflammatory properties.</title>
        <authorList>
            <person name="Valenzuela-Leon P.C."/>
            <person name="Campos Chagas A."/>
            <person name="Martin-Martin I."/>
            <person name="Williams A.E."/>
            <person name="Berger M."/>
            <person name="Shrivastava G."/>
            <person name="Paige A.S."/>
            <person name="Kotsyfakis M."/>
            <person name="Tirloni L."/>
            <person name="Calvo E."/>
        </authorList>
    </citation>
    <scope>FUNCTION</scope>
    <scope>SUBUNIT</scope>
    <scope>INTERACTION WITH HOST F10; F11; F9; PLG AND KALLIKREIN</scope>
    <scope>REACTIVE BOND</scope>
</reference>
<feature type="signal peptide" evidence="1">
    <location>
        <begin position="1"/>
        <end position="19"/>
    </location>
</feature>
<feature type="chain" id="PRO_5003324618" description="Guianensin" evidence="1">
    <location>
        <begin position="20"/>
        <end position="106"/>
    </location>
</feature>
<feature type="domain" description="BPTI/Kunitz inhibitor" evidence="2">
    <location>
        <begin position="24"/>
        <end position="74"/>
    </location>
</feature>
<feature type="region of interest" description="Disordered" evidence="3">
    <location>
        <begin position="84"/>
        <end position="106"/>
    </location>
</feature>
<feature type="compositionally biased region" description="Basic residues" evidence="3">
    <location>
        <begin position="84"/>
        <end position="93"/>
    </location>
</feature>
<feature type="site" description="Reactive bond for host factor Xa (F10)" evidence="5">
    <location>
        <begin position="34"/>
        <end position="35"/>
    </location>
</feature>
<feature type="disulfide bond" evidence="2">
    <location>
        <begin position="24"/>
        <end position="74"/>
    </location>
</feature>
<feature type="disulfide bond" evidence="2">
    <location>
        <begin position="33"/>
        <end position="57"/>
    </location>
</feature>
<feature type="disulfide bond" evidence="2">
    <location>
        <begin position="49"/>
        <end position="70"/>
    </location>
</feature>